<protein>
    <recommendedName>
        <fullName evidence="1">Aspartate--ammonia ligase</fullName>
        <ecNumber evidence="1">6.3.1.1</ecNumber>
    </recommendedName>
    <alternativeName>
        <fullName evidence="1">Asparagine synthetase A</fullName>
    </alternativeName>
</protein>
<feature type="chain" id="PRO_1000061107" description="Aspartate--ammonia ligase">
    <location>
        <begin position="1"/>
        <end position="330"/>
    </location>
</feature>
<gene>
    <name evidence="1" type="primary">asnA</name>
    <name type="ordered locus">Spro_4905</name>
</gene>
<sequence>MKKQFIQKQQQISLVKSFFSRQLEQQLGLIEVQAPILSRLGDGTQDNLSGSEKAVQVKVKTLPDATFEVVHSLAKWKRKTLGSYDFGAGEGLYTHMKALRPDEDRLSAIHSVYVDQWDWERVMGDGERSQDYLESTVRSIYAAIKATEGEVSREYGLTPFLPEQIHFVHSETLLQRYPELDAKGRERAIAKELGAVFLIGIGGKLSHGKSHDVRAPDYDDWTTPAAEGLAGLNGDILVWNPVLQDAFELSSMGIRVDASALKRQLAQTGDEDRLALEWHQSLLRGEMPQTIGGGIGQSRLVMLLLQLSHIGQVQCGVWSPQVREAVEGLL</sequence>
<evidence type="ECO:0000255" key="1">
    <source>
        <dbReference type="HAMAP-Rule" id="MF_00555"/>
    </source>
</evidence>
<keyword id="KW-0028">Amino-acid biosynthesis</keyword>
<keyword id="KW-0061">Asparagine biosynthesis</keyword>
<keyword id="KW-0067">ATP-binding</keyword>
<keyword id="KW-0963">Cytoplasm</keyword>
<keyword id="KW-0436">Ligase</keyword>
<keyword id="KW-0547">Nucleotide-binding</keyword>
<dbReference type="EC" id="6.3.1.1" evidence="1"/>
<dbReference type="EMBL" id="CP000826">
    <property type="protein sequence ID" value="ABV43997.1"/>
    <property type="molecule type" value="Genomic_DNA"/>
</dbReference>
<dbReference type="SMR" id="A8GLK7"/>
<dbReference type="STRING" id="399741.Spro_4905"/>
<dbReference type="KEGG" id="spe:Spro_4905"/>
<dbReference type="eggNOG" id="COG2502">
    <property type="taxonomic scope" value="Bacteria"/>
</dbReference>
<dbReference type="HOGENOM" id="CLU_071543_0_0_6"/>
<dbReference type="OrthoDB" id="3185462at2"/>
<dbReference type="UniPathway" id="UPA00134">
    <property type="reaction ID" value="UER00194"/>
</dbReference>
<dbReference type="GO" id="GO:0005829">
    <property type="term" value="C:cytosol"/>
    <property type="evidence" value="ECO:0007669"/>
    <property type="project" value="TreeGrafter"/>
</dbReference>
<dbReference type="GO" id="GO:0004071">
    <property type="term" value="F:aspartate-ammonia ligase activity"/>
    <property type="evidence" value="ECO:0007669"/>
    <property type="project" value="UniProtKB-UniRule"/>
</dbReference>
<dbReference type="GO" id="GO:0005524">
    <property type="term" value="F:ATP binding"/>
    <property type="evidence" value="ECO:0007669"/>
    <property type="project" value="UniProtKB-UniRule"/>
</dbReference>
<dbReference type="GO" id="GO:0070981">
    <property type="term" value="P:L-asparagine biosynthetic process"/>
    <property type="evidence" value="ECO:0007669"/>
    <property type="project" value="UniProtKB-UniRule"/>
</dbReference>
<dbReference type="Gene3D" id="3.30.930.10">
    <property type="entry name" value="Bira Bifunctional Protein, Domain 2"/>
    <property type="match status" value="1"/>
</dbReference>
<dbReference type="HAMAP" id="MF_00555">
    <property type="entry name" value="AsnA"/>
    <property type="match status" value="1"/>
</dbReference>
<dbReference type="InterPro" id="IPR006195">
    <property type="entry name" value="aa-tRNA-synth_II"/>
</dbReference>
<dbReference type="InterPro" id="IPR045864">
    <property type="entry name" value="aa-tRNA-synth_II/BPL/LPL"/>
</dbReference>
<dbReference type="InterPro" id="IPR004618">
    <property type="entry name" value="AsnA"/>
</dbReference>
<dbReference type="NCBIfam" id="TIGR00669">
    <property type="entry name" value="asnA"/>
    <property type="match status" value="1"/>
</dbReference>
<dbReference type="PANTHER" id="PTHR30073">
    <property type="entry name" value="ASPARTATE--AMMONIA LIGASE"/>
    <property type="match status" value="1"/>
</dbReference>
<dbReference type="PANTHER" id="PTHR30073:SF5">
    <property type="entry name" value="ASPARTATE--AMMONIA LIGASE"/>
    <property type="match status" value="1"/>
</dbReference>
<dbReference type="Pfam" id="PF03590">
    <property type="entry name" value="AsnA"/>
    <property type="match status" value="1"/>
</dbReference>
<dbReference type="PIRSF" id="PIRSF001555">
    <property type="entry name" value="Asp_ammon_ligase"/>
    <property type="match status" value="1"/>
</dbReference>
<dbReference type="SUPFAM" id="SSF55681">
    <property type="entry name" value="Class II aaRS and biotin synthetases"/>
    <property type="match status" value="1"/>
</dbReference>
<dbReference type="PROSITE" id="PS50862">
    <property type="entry name" value="AA_TRNA_LIGASE_II"/>
    <property type="match status" value="1"/>
</dbReference>
<organism>
    <name type="scientific">Serratia proteamaculans (strain 568)</name>
    <dbReference type="NCBI Taxonomy" id="399741"/>
    <lineage>
        <taxon>Bacteria</taxon>
        <taxon>Pseudomonadati</taxon>
        <taxon>Pseudomonadota</taxon>
        <taxon>Gammaproteobacteria</taxon>
        <taxon>Enterobacterales</taxon>
        <taxon>Yersiniaceae</taxon>
        <taxon>Serratia</taxon>
    </lineage>
</organism>
<comment type="catalytic activity">
    <reaction evidence="1">
        <text>L-aspartate + NH4(+) + ATP = L-asparagine + AMP + diphosphate + H(+)</text>
        <dbReference type="Rhea" id="RHEA:11372"/>
        <dbReference type="ChEBI" id="CHEBI:15378"/>
        <dbReference type="ChEBI" id="CHEBI:28938"/>
        <dbReference type="ChEBI" id="CHEBI:29991"/>
        <dbReference type="ChEBI" id="CHEBI:30616"/>
        <dbReference type="ChEBI" id="CHEBI:33019"/>
        <dbReference type="ChEBI" id="CHEBI:58048"/>
        <dbReference type="ChEBI" id="CHEBI:456215"/>
        <dbReference type="EC" id="6.3.1.1"/>
    </reaction>
</comment>
<comment type="pathway">
    <text evidence="1">Amino-acid biosynthesis; L-asparagine biosynthesis; L-asparagine from L-aspartate (ammonia route): step 1/1.</text>
</comment>
<comment type="subcellular location">
    <subcellularLocation>
        <location evidence="1">Cytoplasm</location>
    </subcellularLocation>
</comment>
<comment type="similarity">
    <text evidence="1">Belongs to the class-II aminoacyl-tRNA synthetase family. AsnA subfamily.</text>
</comment>
<accession>A8GLK7</accession>
<proteinExistence type="inferred from homology"/>
<reference key="1">
    <citation type="submission" date="2007-09" db="EMBL/GenBank/DDBJ databases">
        <title>Complete sequence of chromosome of Serratia proteamaculans 568.</title>
        <authorList>
            <consortium name="US DOE Joint Genome Institute"/>
            <person name="Copeland A."/>
            <person name="Lucas S."/>
            <person name="Lapidus A."/>
            <person name="Barry K."/>
            <person name="Glavina del Rio T."/>
            <person name="Dalin E."/>
            <person name="Tice H."/>
            <person name="Pitluck S."/>
            <person name="Chain P."/>
            <person name="Malfatti S."/>
            <person name="Shin M."/>
            <person name="Vergez L."/>
            <person name="Schmutz J."/>
            <person name="Larimer F."/>
            <person name="Land M."/>
            <person name="Hauser L."/>
            <person name="Kyrpides N."/>
            <person name="Kim E."/>
            <person name="Taghavi S."/>
            <person name="Newman L."/>
            <person name="Vangronsveld J."/>
            <person name="van der Lelie D."/>
            <person name="Richardson P."/>
        </authorList>
    </citation>
    <scope>NUCLEOTIDE SEQUENCE [LARGE SCALE GENOMIC DNA]</scope>
    <source>
        <strain>568</strain>
    </source>
</reference>
<name>ASNA_SERP5</name>